<organism>
    <name type="scientific">Enydra sessilis</name>
    <name type="common">Smallray swampwort</name>
    <name type="synonym">Eclipta sessilis</name>
    <dbReference type="NCBI Taxonomy" id="183029"/>
    <lineage>
        <taxon>Eukaryota</taxon>
        <taxon>Viridiplantae</taxon>
        <taxon>Streptophyta</taxon>
        <taxon>Embryophyta</taxon>
        <taxon>Tracheophyta</taxon>
        <taxon>Spermatophyta</taxon>
        <taxon>Magnoliopsida</taxon>
        <taxon>eudicotyledons</taxon>
        <taxon>Gunneridae</taxon>
        <taxon>Pentapetalae</taxon>
        <taxon>asterids</taxon>
        <taxon>campanulids</taxon>
        <taxon>Asterales</taxon>
        <taxon>Asteraceae</taxon>
        <taxon>Asteroideae</taxon>
        <taxon>Heliantheae alliance</taxon>
        <taxon>Neurolaeneae</taxon>
        <taxon>Enydra</taxon>
    </lineage>
</organism>
<proteinExistence type="inferred from homology"/>
<accession>Q8HVT0</accession>
<evidence type="ECO:0000255" key="1">
    <source>
        <dbReference type="HAMAP-Rule" id="MF_01351"/>
    </source>
</evidence>
<gene>
    <name evidence="1" type="primary">ndhI</name>
</gene>
<keyword id="KW-0004">4Fe-4S</keyword>
<keyword id="KW-0150">Chloroplast</keyword>
<keyword id="KW-0408">Iron</keyword>
<keyword id="KW-0411">Iron-sulfur</keyword>
<keyword id="KW-0472">Membrane</keyword>
<keyword id="KW-0479">Metal-binding</keyword>
<keyword id="KW-0520">NAD</keyword>
<keyword id="KW-0521">NADP</keyword>
<keyword id="KW-0934">Plastid</keyword>
<keyword id="KW-0618">Plastoquinone</keyword>
<keyword id="KW-0874">Quinone</keyword>
<keyword id="KW-0677">Repeat</keyword>
<keyword id="KW-0793">Thylakoid</keyword>
<keyword id="KW-1278">Translocase</keyword>
<protein>
    <recommendedName>
        <fullName evidence="1">NAD(P)H-quinone oxidoreductase subunit I, chloroplastic</fullName>
        <ecNumber evidence="1">7.1.1.-</ecNumber>
    </recommendedName>
    <alternativeName>
        <fullName evidence="1">NAD(P)H dehydrogenase subunit I</fullName>
        <shortName evidence="1">NDH subunit I</shortName>
    </alternativeName>
    <alternativeName>
        <fullName evidence="1">NADH-plastoquinone oxidoreductase subunit I</fullName>
    </alternativeName>
</protein>
<geneLocation type="chloroplast"/>
<feature type="chain" id="PRO_0000250785" description="NAD(P)H-quinone oxidoreductase subunit I, chloroplastic">
    <location>
        <begin position="1"/>
        <end position="166"/>
    </location>
</feature>
<feature type="domain" description="4Fe-4S ferredoxin-type 1" evidence="1">
    <location>
        <begin position="55"/>
        <end position="84"/>
    </location>
</feature>
<feature type="domain" description="4Fe-4S ferredoxin-type 2" evidence="1">
    <location>
        <begin position="95"/>
        <end position="124"/>
    </location>
</feature>
<feature type="binding site" evidence="1">
    <location>
        <position position="64"/>
    </location>
    <ligand>
        <name>[4Fe-4S] cluster</name>
        <dbReference type="ChEBI" id="CHEBI:49883"/>
        <label>1</label>
    </ligand>
</feature>
<feature type="binding site" evidence="1">
    <location>
        <position position="67"/>
    </location>
    <ligand>
        <name>[4Fe-4S] cluster</name>
        <dbReference type="ChEBI" id="CHEBI:49883"/>
        <label>1</label>
    </ligand>
</feature>
<feature type="binding site" evidence="1">
    <location>
        <position position="70"/>
    </location>
    <ligand>
        <name>[4Fe-4S] cluster</name>
        <dbReference type="ChEBI" id="CHEBI:49883"/>
        <label>1</label>
    </ligand>
</feature>
<feature type="binding site" evidence="1">
    <location>
        <position position="74"/>
    </location>
    <ligand>
        <name>[4Fe-4S] cluster</name>
        <dbReference type="ChEBI" id="CHEBI:49883"/>
        <label>2</label>
    </ligand>
</feature>
<feature type="binding site" evidence="1">
    <location>
        <position position="104"/>
    </location>
    <ligand>
        <name>[4Fe-4S] cluster</name>
        <dbReference type="ChEBI" id="CHEBI:49883"/>
        <label>2</label>
    </ligand>
</feature>
<feature type="binding site" evidence="1">
    <location>
        <position position="107"/>
    </location>
    <ligand>
        <name>[4Fe-4S] cluster</name>
        <dbReference type="ChEBI" id="CHEBI:49883"/>
        <label>2</label>
    </ligand>
</feature>
<feature type="binding site" evidence="1">
    <location>
        <position position="110"/>
    </location>
    <ligand>
        <name>[4Fe-4S] cluster</name>
        <dbReference type="ChEBI" id="CHEBI:49883"/>
        <label>2</label>
    </ligand>
</feature>
<feature type="binding site" evidence="1">
    <location>
        <position position="114"/>
    </location>
    <ligand>
        <name>[4Fe-4S] cluster</name>
        <dbReference type="ChEBI" id="CHEBI:49883"/>
        <label>1</label>
    </ligand>
</feature>
<name>NDHI_ENYSE</name>
<sequence>MFPMVTEFMNYGQQTVRAARYIGQGFMITLSHANRLPVTIQYPYEKLITSERFRGRIHFEFDKCIACEVCVRVCPIDLPVVDWKLETDIRKKRLLNYSIDFGVCIFCGNCVEYCPTNCLSMTEEYELSTYDRHELNYNQIALGRLPMSIIDDYTIRTILNLPEIKT</sequence>
<dbReference type="EC" id="7.1.1.-" evidence="1"/>
<dbReference type="EMBL" id="AF383783">
    <property type="protein sequence ID" value="AAN61724.1"/>
    <property type="molecule type" value="Genomic_DNA"/>
</dbReference>
<dbReference type="RefSeq" id="YP_010924050.1">
    <property type="nucleotide sequence ID" value="NC_081940.1"/>
</dbReference>
<dbReference type="SMR" id="Q8HVT0"/>
<dbReference type="GeneID" id="84335283"/>
<dbReference type="GO" id="GO:0009535">
    <property type="term" value="C:chloroplast thylakoid membrane"/>
    <property type="evidence" value="ECO:0007669"/>
    <property type="project" value="UniProtKB-SubCell"/>
</dbReference>
<dbReference type="GO" id="GO:0051539">
    <property type="term" value="F:4 iron, 4 sulfur cluster binding"/>
    <property type="evidence" value="ECO:0007669"/>
    <property type="project" value="UniProtKB-KW"/>
</dbReference>
<dbReference type="GO" id="GO:0005506">
    <property type="term" value="F:iron ion binding"/>
    <property type="evidence" value="ECO:0007669"/>
    <property type="project" value="UniProtKB-UniRule"/>
</dbReference>
<dbReference type="GO" id="GO:0008137">
    <property type="term" value="F:NADH dehydrogenase (ubiquinone) activity"/>
    <property type="evidence" value="ECO:0007669"/>
    <property type="project" value="InterPro"/>
</dbReference>
<dbReference type="GO" id="GO:0048038">
    <property type="term" value="F:quinone binding"/>
    <property type="evidence" value="ECO:0007669"/>
    <property type="project" value="UniProtKB-KW"/>
</dbReference>
<dbReference type="GO" id="GO:0019684">
    <property type="term" value="P:photosynthesis, light reaction"/>
    <property type="evidence" value="ECO:0007669"/>
    <property type="project" value="UniProtKB-UniRule"/>
</dbReference>
<dbReference type="FunFam" id="3.30.70.3270:FF:000006">
    <property type="entry name" value="NAD(P)H-quinone oxidoreductase subunit I, chloroplastic"/>
    <property type="match status" value="1"/>
</dbReference>
<dbReference type="Gene3D" id="3.30.70.3270">
    <property type="match status" value="1"/>
</dbReference>
<dbReference type="HAMAP" id="MF_01351">
    <property type="entry name" value="NDH1_NuoI"/>
    <property type="match status" value="1"/>
</dbReference>
<dbReference type="InterPro" id="IPR017896">
    <property type="entry name" value="4Fe4S_Fe-S-bd"/>
</dbReference>
<dbReference type="InterPro" id="IPR017900">
    <property type="entry name" value="4Fe4S_Fe_S_CS"/>
</dbReference>
<dbReference type="InterPro" id="IPR010226">
    <property type="entry name" value="NADH_quinone_OxRdtase_chainI"/>
</dbReference>
<dbReference type="InterPro" id="IPR004497">
    <property type="entry name" value="NDHI"/>
</dbReference>
<dbReference type="NCBIfam" id="TIGR00403">
    <property type="entry name" value="ndhI"/>
    <property type="match status" value="1"/>
</dbReference>
<dbReference type="NCBIfam" id="TIGR01971">
    <property type="entry name" value="NuoI"/>
    <property type="match status" value="1"/>
</dbReference>
<dbReference type="NCBIfam" id="NF004537">
    <property type="entry name" value="PRK05888.1-3"/>
    <property type="match status" value="1"/>
</dbReference>
<dbReference type="PANTHER" id="PTHR47275">
    <property type="entry name" value="NAD(P)H-QUINONE OXIDOREDUCTASE SUBUNIT I, CHLOROPLASTIC"/>
    <property type="match status" value="1"/>
</dbReference>
<dbReference type="PANTHER" id="PTHR47275:SF1">
    <property type="entry name" value="NAD(P)H-QUINONE OXIDOREDUCTASE SUBUNIT I, CHLOROPLASTIC"/>
    <property type="match status" value="1"/>
</dbReference>
<dbReference type="Pfam" id="PF13237">
    <property type="entry name" value="Fer4_10"/>
    <property type="match status" value="1"/>
</dbReference>
<dbReference type="SUPFAM" id="SSF54862">
    <property type="entry name" value="4Fe-4S ferredoxins"/>
    <property type="match status" value="1"/>
</dbReference>
<dbReference type="PROSITE" id="PS00198">
    <property type="entry name" value="4FE4S_FER_1"/>
    <property type="match status" value="2"/>
</dbReference>
<dbReference type="PROSITE" id="PS51379">
    <property type="entry name" value="4FE4S_FER_2"/>
    <property type="match status" value="2"/>
</dbReference>
<comment type="function">
    <text evidence="1">NDH shuttles electrons from NAD(P)H:plastoquinone, via FMN and iron-sulfur (Fe-S) centers, to quinones in the photosynthetic chain and possibly in a chloroplast respiratory chain. The immediate electron acceptor for the enzyme in this species is believed to be plastoquinone. Couples the redox reaction to proton translocation, and thus conserves the redox energy in a proton gradient.</text>
</comment>
<comment type="catalytic activity">
    <reaction evidence="1">
        <text>a plastoquinone + NADH + (n+1) H(+)(in) = a plastoquinol + NAD(+) + n H(+)(out)</text>
        <dbReference type="Rhea" id="RHEA:42608"/>
        <dbReference type="Rhea" id="RHEA-COMP:9561"/>
        <dbReference type="Rhea" id="RHEA-COMP:9562"/>
        <dbReference type="ChEBI" id="CHEBI:15378"/>
        <dbReference type="ChEBI" id="CHEBI:17757"/>
        <dbReference type="ChEBI" id="CHEBI:57540"/>
        <dbReference type="ChEBI" id="CHEBI:57945"/>
        <dbReference type="ChEBI" id="CHEBI:62192"/>
    </reaction>
</comment>
<comment type="catalytic activity">
    <reaction evidence="1">
        <text>a plastoquinone + NADPH + (n+1) H(+)(in) = a plastoquinol + NADP(+) + n H(+)(out)</text>
        <dbReference type="Rhea" id="RHEA:42612"/>
        <dbReference type="Rhea" id="RHEA-COMP:9561"/>
        <dbReference type="Rhea" id="RHEA-COMP:9562"/>
        <dbReference type="ChEBI" id="CHEBI:15378"/>
        <dbReference type="ChEBI" id="CHEBI:17757"/>
        <dbReference type="ChEBI" id="CHEBI:57783"/>
        <dbReference type="ChEBI" id="CHEBI:58349"/>
        <dbReference type="ChEBI" id="CHEBI:62192"/>
    </reaction>
</comment>
<comment type="cofactor">
    <cofactor evidence="1">
        <name>[4Fe-4S] cluster</name>
        <dbReference type="ChEBI" id="CHEBI:49883"/>
    </cofactor>
    <text evidence="1">Binds 2 [4Fe-4S] clusters per subunit.</text>
</comment>
<comment type="subunit">
    <text evidence="1">NDH is composed of at least 16 different subunits, 5 of which are encoded in the nucleus.</text>
</comment>
<comment type="subcellular location">
    <subcellularLocation>
        <location evidence="1">Plastid</location>
        <location evidence="1">Chloroplast thylakoid membrane</location>
        <topology evidence="1">Peripheral membrane protein</topology>
    </subcellularLocation>
</comment>
<comment type="similarity">
    <text evidence="1">Belongs to the complex I 23 kDa subunit family.</text>
</comment>
<reference key="1">
    <citation type="submission" date="2003-01" db="EMBL/GenBank/DDBJ databases">
        <title>Chloroplast DNA phylogeny of tribe Heliantheae (Asteraceae).</title>
        <authorList>
            <person name="Panero J.L."/>
            <person name="Baldwin B.G."/>
            <person name="Schilling E.E."/>
            <person name="Clevinger J.A."/>
        </authorList>
    </citation>
    <scope>NUCLEOTIDE SEQUENCE [GENOMIC DNA]</scope>
</reference>